<feature type="signal peptide" evidence="2">
    <location>
        <begin position="1"/>
        <end position="16"/>
    </location>
</feature>
<feature type="chain" id="PRO_0000030717" description="RING-H2 finger protein ATL79">
    <location>
        <begin position="17"/>
        <end position="166"/>
    </location>
</feature>
<feature type="transmembrane region" description="Helical" evidence="2">
    <location>
        <begin position="41"/>
        <end position="61"/>
    </location>
</feature>
<feature type="zinc finger region" description="RING-type; atypical" evidence="3">
    <location>
        <begin position="107"/>
        <end position="149"/>
    </location>
</feature>
<feature type="region of interest" description="Disordered" evidence="4">
    <location>
        <begin position="71"/>
        <end position="90"/>
    </location>
</feature>
<feature type="compositionally biased region" description="Low complexity" evidence="4">
    <location>
        <begin position="81"/>
        <end position="90"/>
    </location>
</feature>
<dbReference type="EC" id="2.3.2.27" evidence="5"/>
<dbReference type="EMBL" id="AB025628">
    <property type="protein sequence ID" value="BAB09087.1"/>
    <property type="molecule type" value="Genomic_DNA"/>
</dbReference>
<dbReference type="EMBL" id="CP002688">
    <property type="protein sequence ID" value="AED95537.1"/>
    <property type="molecule type" value="Genomic_DNA"/>
</dbReference>
<dbReference type="EMBL" id="AK175469">
    <property type="protein sequence ID" value="BAD43232.1"/>
    <property type="molecule type" value="mRNA"/>
</dbReference>
<dbReference type="EMBL" id="AK176643">
    <property type="protein sequence ID" value="BAD44406.1"/>
    <property type="molecule type" value="mRNA"/>
</dbReference>
<dbReference type="EMBL" id="AY085503">
    <property type="protein sequence ID" value="AAM62727.1"/>
    <property type="molecule type" value="mRNA"/>
</dbReference>
<dbReference type="RefSeq" id="NP_199572.1">
    <property type="nucleotide sequence ID" value="NM_124134.5"/>
</dbReference>
<dbReference type="SMR" id="Q9FGJ6"/>
<dbReference type="BioGRID" id="20059">
    <property type="interactions" value="19"/>
</dbReference>
<dbReference type="IntAct" id="Q9FGJ6">
    <property type="interactions" value="19"/>
</dbReference>
<dbReference type="STRING" id="3702.Q9FGJ6"/>
<dbReference type="PaxDb" id="3702-AT5G47610.1"/>
<dbReference type="EnsemblPlants" id="AT5G47610.1">
    <property type="protein sequence ID" value="AT5G47610.1"/>
    <property type="gene ID" value="AT5G47610"/>
</dbReference>
<dbReference type="GeneID" id="834811"/>
<dbReference type="Gramene" id="AT5G47610.1">
    <property type="protein sequence ID" value="AT5G47610.1"/>
    <property type="gene ID" value="AT5G47610"/>
</dbReference>
<dbReference type="KEGG" id="ath:AT5G47610"/>
<dbReference type="Araport" id="AT5G47610"/>
<dbReference type="TAIR" id="AT5G47610">
    <property type="gene designation" value="ATL79"/>
</dbReference>
<dbReference type="eggNOG" id="KOG0800">
    <property type="taxonomic scope" value="Eukaryota"/>
</dbReference>
<dbReference type="HOGENOM" id="CLU_013137_9_4_1"/>
<dbReference type="InParanoid" id="Q9FGJ6"/>
<dbReference type="OMA" id="TPTCNSH"/>
<dbReference type="PhylomeDB" id="Q9FGJ6"/>
<dbReference type="UniPathway" id="UPA00143"/>
<dbReference type="PRO" id="PR:Q9FGJ6"/>
<dbReference type="Proteomes" id="UP000006548">
    <property type="component" value="Chromosome 5"/>
</dbReference>
<dbReference type="ExpressionAtlas" id="Q9FGJ6">
    <property type="expression patterns" value="baseline and differential"/>
</dbReference>
<dbReference type="GO" id="GO:0016020">
    <property type="term" value="C:membrane"/>
    <property type="evidence" value="ECO:0007669"/>
    <property type="project" value="UniProtKB-SubCell"/>
</dbReference>
<dbReference type="GO" id="GO:0016740">
    <property type="term" value="F:transferase activity"/>
    <property type="evidence" value="ECO:0007669"/>
    <property type="project" value="UniProtKB-KW"/>
</dbReference>
<dbReference type="GO" id="GO:0008270">
    <property type="term" value="F:zinc ion binding"/>
    <property type="evidence" value="ECO:0007669"/>
    <property type="project" value="UniProtKB-KW"/>
</dbReference>
<dbReference type="GO" id="GO:0016567">
    <property type="term" value="P:protein ubiquitination"/>
    <property type="evidence" value="ECO:0007669"/>
    <property type="project" value="UniProtKB-UniPathway"/>
</dbReference>
<dbReference type="CDD" id="cd16461">
    <property type="entry name" value="RING-H2_EL5-like"/>
    <property type="match status" value="1"/>
</dbReference>
<dbReference type="Gene3D" id="3.30.40.10">
    <property type="entry name" value="Zinc/RING finger domain, C3HC4 (zinc finger)"/>
    <property type="match status" value="1"/>
</dbReference>
<dbReference type="InterPro" id="IPR044602">
    <property type="entry name" value="ATL10/ATL72-79-like"/>
</dbReference>
<dbReference type="InterPro" id="IPR001841">
    <property type="entry name" value="Znf_RING"/>
</dbReference>
<dbReference type="InterPro" id="IPR013083">
    <property type="entry name" value="Znf_RING/FYVE/PHD"/>
</dbReference>
<dbReference type="PANTHER" id="PTHR46905">
    <property type="entry name" value="RING-H2 FINGER PROTEIN ATL78"/>
    <property type="match status" value="1"/>
</dbReference>
<dbReference type="PANTHER" id="PTHR46905:SF1">
    <property type="entry name" value="RING-TYPE E3 UBIQUITIN TRANSFERASE"/>
    <property type="match status" value="1"/>
</dbReference>
<dbReference type="Pfam" id="PF13639">
    <property type="entry name" value="zf-RING_2"/>
    <property type="match status" value="1"/>
</dbReference>
<dbReference type="SMART" id="SM00184">
    <property type="entry name" value="RING"/>
    <property type="match status" value="1"/>
</dbReference>
<dbReference type="SUPFAM" id="SSF57850">
    <property type="entry name" value="RING/U-box"/>
    <property type="match status" value="1"/>
</dbReference>
<dbReference type="PROSITE" id="PS50089">
    <property type="entry name" value="ZF_RING_2"/>
    <property type="match status" value="1"/>
</dbReference>
<proteinExistence type="evidence at transcript level"/>
<gene>
    <name type="primary">ATL79</name>
    <name type="ordered locus">At5g47610</name>
    <name type="ORF">MNJ7.20</name>
</gene>
<protein>
    <recommendedName>
        <fullName>RING-H2 finger protein ATL79</fullName>
        <ecNumber evidence="5">2.3.2.27</ecNumber>
    </recommendedName>
    <alternativeName>
        <fullName evidence="5">RING-type E3 ubiquitin transferase ATL79</fullName>
    </alternativeName>
</protein>
<organism>
    <name type="scientific">Arabidopsis thaliana</name>
    <name type="common">Mouse-ear cress</name>
    <dbReference type="NCBI Taxonomy" id="3702"/>
    <lineage>
        <taxon>Eukaryota</taxon>
        <taxon>Viridiplantae</taxon>
        <taxon>Streptophyta</taxon>
        <taxon>Embryophyta</taxon>
        <taxon>Tracheophyta</taxon>
        <taxon>Spermatophyta</taxon>
        <taxon>Magnoliopsida</taxon>
        <taxon>eudicotyledons</taxon>
        <taxon>Gunneridae</taxon>
        <taxon>Pentapetalae</taxon>
        <taxon>rosids</taxon>
        <taxon>malvids</taxon>
        <taxon>Brassicales</taxon>
        <taxon>Brassicaceae</taxon>
        <taxon>Camelineae</taxon>
        <taxon>Arabidopsis</taxon>
    </lineage>
</organism>
<keyword id="KW-0472">Membrane</keyword>
<keyword id="KW-0479">Metal-binding</keyword>
<keyword id="KW-1185">Reference proteome</keyword>
<keyword id="KW-0732">Signal</keyword>
<keyword id="KW-0808">Transferase</keyword>
<keyword id="KW-0812">Transmembrane</keyword>
<keyword id="KW-1133">Transmembrane helix</keyword>
<keyword id="KW-0833">Ubl conjugation pathway</keyword>
<keyword id="KW-0862">Zinc</keyword>
<keyword id="KW-0863">Zinc-finger</keyword>
<sequence>MRLLVAEAASPLSSAATPTCNSHTCRWKPYSNSTDFTANASVLLILVISALICALSLYAAIRCFLRPTLETEDDHKPDPEAAASSTPTTPTLVYSSDLELAGAEAECAICLSEFEQGESIQVLEKCQHGFHVKCIHKWLSTRSSCPTCRTSIFSQHSETPSSHINA</sequence>
<comment type="catalytic activity">
    <reaction evidence="5">
        <text>S-ubiquitinyl-[E2 ubiquitin-conjugating enzyme]-L-cysteine + [acceptor protein]-L-lysine = [E2 ubiquitin-conjugating enzyme]-L-cysteine + N(6)-ubiquitinyl-[acceptor protein]-L-lysine.</text>
        <dbReference type="EC" id="2.3.2.27"/>
    </reaction>
</comment>
<comment type="pathway">
    <text>Protein modification; protein ubiquitination.</text>
</comment>
<comment type="subcellular location">
    <subcellularLocation>
        <location evidence="5">Membrane</location>
        <topology evidence="5">Single-pass membrane protein</topology>
    </subcellularLocation>
</comment>
<comment type="domain">
    <text evidence="1">The RING-type zinc finger domain mediates binding to an E2 ubiquitin-conjugating enzyme.</text>
</comment>
<comment type="similarity">
    <text evidence="5">Belongs to the RING-type zinc finger family. ATL subfamily.</text>
</comment>
<accession>Q9FGJ6</accession>
<name>ATL79_ARATH</name>
<evidence type="ECO:0000250" key="1"/>
<evidence type="ECO:0000255" key="2"/>
<evidence type="ECO:0000255" key="3">
    <source>
        <dbReference type="PROSITE-ProRule" id="PRU00175"/>
    </source>
</evidence>
<evidence type="ECO:0000256" key="4">
    <source>
        <dbReference type="SAM" id="MobiDB-lite"/>
    </source>
</evidence>
<evidence type="ECO:0000305" key="5"/>
<reference key="1">
    <citation type="submission" date="1999-04" db="EMBL/GenBank/DDBJ databases">
        <title>Structural analysis of Arabidopsis thaliana chromosome 5. XI.</title>
        <authorList>
            <person name="Kaneko T."/>
            <person name="Katoh T."/>
            <person name="Asamizu E."/>
            <person name="Sato S."/>
            <person name="Nakamura Y."/>
            <person name="Kotani H."/>
            <person name="Tabata S."/>
        </authorList>
    </citation>
    <scope>NUCLEOTIDE SEQUENCE [LARGE SCALE GENOMIC DNA]</scope>
    <source>
        <strain>cv. Columbia</strain>
    </source>
</reference>
<reference key="2">
    <citation type="journal article" date="2017" name="Plant J.">
        <title>Araport11: a complete reannotation of the Arabidopsis thaliana reference genome.</title>
        <authorList>
            <person name="Cheng C.Y."/>
            <person name="Krishnakumar V."/>
            <person name="Chan A.P."/>
            <person name="Thibaud-Nissen F."/>
            <person name="Schobel S."/>
            <person name="Town C.D."/>
        </authorList>
    </citation>
    <scope>GENOME REANNOTATION</scope>
    <source>
        <strain>cv. Columbia</strain>
    </source>
</reference>
<reference key="3">
    <citation type="submission" date="2004-09" db="EMBL/GenBank/DDBJ databases">
        <title>Large-scale analysis of RIKEN Arabidopsis full-length (RAFL) cDNAs.</title>
        <authorList>
            <person name="Totoki Y."/>
            <person name="Seki M."/>
            <person name="Ishida J."/>
            <person name="Nakajima M."/>
            <person name="Enju A."/>
            <person name="Kamiya A."/>
            <person name="Narusaka M."/>
            <person name="Shin-i T."/>
            <person name="Nakagawa M."/>
            <person name="Sakamoto N."/>
            <person name="Oishi K."/>
            <person name="Kohara Y."/>
            <person name="Kobayashi M."/>
            <person name="Toyoda A."/>
            <person name="Sakaki Y."/>
            <person name="Sakurai T."/>
            <person name="Iida K."/>
            <person name="Akiyama K."/>
            <person name="Satou M."/>
            <person name="Toyoda T."/>
            <person name="Konagaya A."/>
            <person name="Carninci P."/>
            <person name="Kawai J."/>
            <person name="Hayashizaki Y."/>
            <person name="Shinozaki K."/>
        </authorList>
    </citation>
    <scope>NUCLEOTIDE SEQUENCE [LARGE SCALE MRNA]</scope>
    <source>
        <strain>cv. Columbia</strain>
    </source>
</reference>
<reference key="4">
    <citation type="submission" date="2002-03" db="EMBL/GenBank/DDBJ databases">
        <title>Full-length cDNA from Arabidopsis thaliana.</title>
        <authorList>
            <person name="Brover V.V."/>
            <person name="Troukhan M.E."/>
            <person name="Alexandrov N.A."/>
            <person name="Lu Y.-P."/>
            <person name="Flavell R.B."/>
            <person name="Feldmann K.A."/>
        </authorList>
    </citation>
    <scope>NUCLEOTIDE SEQUENCE [LARGE SCALE MRNA]</scope>
</reference>
<reference key="5">
    <citation type="journal article" date="2002" name="Genome Biol.">
        <title>Evaluation and classification of RING-finger domains encoded by the Arabidopsis genome.</title>
        <authorList>
            <person name="Kosarev P."/>
            <person name="Mayer K.F.X."/>
            <person name="Hardtke C.S."/>
        </authorList>
    </citation>
    <scope>GENE FAMILY ORGANIZATION</scope>
</reference>
<reference key="6">
    <citation type="journal article" date="2006" name="J. Mol. Evol.">
        <title>The ATL gene family from Arabidopsis thaliana and Oryza sativa comprises a large number of putative ubiquitin ligases of the RING-H2 type.</title>
        <authorList>
            <person name="Serrano M."/>
            <person name="Parra S."/>
            <person name="Alcaraz L.D."/>
            <person name="Guzman P."/>
        </authorList>
    </citation>
    <scope>NOMENCLATURE</scope>
    <scope>GENE FAMILY ORGANIZATION</scope>
</reference>